<evidence type="ECO:0000250" key="1"/>
<evidence type="ECO:0000255" key="2"/>
<evidence type="ECO:0000256" key="3">
    <source>
        <dbReference type="SAM" id="MobiDB-lite"/>
    </source>
</evidence>
<evidence type="ECO:0000305" key="4"/>
<dbReference type="EMBL" id="M15390">
    <property type="protein sequence ID" value="AAB00770.1"/>
    <property type="molecule type" value="Genomic_DNA"/>
</dbReference>
<dbReference type="EMBL" id="X05291">
    <property type="protein sequence ID" value="CAA28914.1"/>
    <property type="molecule type" value="Genomic_RNA"/>
</dbReference>
<dbReference type="PIR" id="C26262">
    <property type="entry name" value="VCLJG2"/>
</dbReference>
<dbReference type="SMR" id="P04577"/>
<dbReference type="GlyCosmos" id="P04577">
    <property type="glycosylation" value="30 sites, No reported glycans"/>
</dbReference>
<dbReference type="Proteomes" id="UP000007426">
    <property type="component" value="Genome"/>
</dbReference>
<dbReference type="Proteomes" id="UP000246871">
    <property type="component" value="Segment"/>
</dbReference>
<dbReference type="GO" id="GO:0044175">
    <property type="term" value="C:host cell endosome membrane"/>
    <property type="evidence" value="ECO:0007669"/>
    <property type="project" value="UniProtKB-SubCell"/>
</dbReference>
<dbReference type="GO" id="GO:0020002">
    <property type="term" value="C:host cell plasma membrane"/>
    <property type="evidence" value="ECO:0007669"/>
    <property type="project" value="UniProtKB-SubCell"/>
</dbReference>
<dbReference type="GO" id="GO:0016020">
    <property type="term" value="C:membrane"/>
    <property type="evidence" value="ECO:0007669"/>
    <property type="project" value="UniProtKB-KW"/>
</dbReference>
<dbReference type="GO" id="GO:0019031">
    <property type="term" value="C:viral envelope"/>
    <property type="evidence" value="ECO:0007669"/>
    <property type="project" value="UniProtKB-KW"/>
</dbReference>
<dbReference type="GO" id="GO:0055036">
    <property type="term" value="C:virion membrane"/>
    <property type="evidence" value="ECO:0007669"/>
    <property type="project" value="UniProtKB-SubCell"/>
</dbReference>
<dbReference type="GO" id="GO:0005198">
    <property type="term" value="F:structural molecule activity"/>
    <property type="evidence" value="ECO:0007669"/>
    <property type="project" value="InterPro"/>
</dbReference>
<dbReference type="GO" id="GO:0075512">
    <property type="term" value="P:clathrin-dependent endocytosis of virus by host cell"/>
    <property type="evidence" value="ECO:0007669"/>
    <property type="project" value="UniProtKB-KW"/>
</dbReference>
<dbReference type="GO" id="GO:0039654">
    <property type="term" value="P:fusion of virus membrane with host endosome membrane"/>
    <property type="evidence" value="ECO:0007669"/>
    <property type="project" value="UniProtKB-KW"/>
</dbReference>
<dbReference type="GO" id="GO:0052170">
    <property type="term" value="P:symbiont-mediated suppression of host innate immune response"/>
    <property type="evidence" value="ECO:0007669"/>
    <property type="project" value="UniProtKB-KW"/>
</dbReference>
<dbReference type="GO" id="GO:0039587">
    <property type="term" value="P:symbiont-mediated-mediated suppression of host tetherin activity"/>
    <property type="evidence" value="ECO:0007669"/>
    <property type="project" value="UniProtKB-KW"/>
</dbReference>
<dbReference type="GO" id="GO:0019062">
    <property type="term" value="P:virion attachment to host cell"/>
    <property type="evidence" value="ECO:0007669"/>
    <property type="project" value="UniProtKB-KW"/>
</dbReference>
<dbReference type="CDD" id="cd09909">
    <property type="entry name" value="HIV-1-like_HR1-HR2"/>
    <property type="match status" value="1"/>
</dbReference>
<dbReference type="Gene3D" id="1.10.287.210">
    <property type="match status" value="1"/>
</dbReference>
<dbReference type="Gene3D" id="2.170.40.20">
    <property type="entry name" value="Human immunodeficiency virus 1, Gp160, envelope glycoprotein"/>
    <property type="match status" value="2"/>
</dbReference>
<dbReference type="InterPro" id="IPR036377">
    <property type="entry name" value="Gp120_core_sf"/>
</dbReference>
<dbReference type="InterPro" id="IPR000328">
    <property type="entry name" value="GP41-like"/>
</dbReference>
<dbReference type="InterPro" id="IPR000777">
    <property type="entry name" value="HIV1_Gp120"/>
</dbReference>
<dbReference type="Pfam" id="PF00516">
    <property type="entry name" value="GP120"/>
    <property type="match status" value="1"/>
</dbReference>
<dbReference type="Pfam" id="PF00517">
    <property type="entry name" value="GP41"/>
    <property type="match status" value="1"/>
</dbReference>
<dbReference type="SUPFAM" id="SSF56502">
    <property type="entry name" value="gp120 core"/>
    <property type="match status" value="1"/>
</dbReference>
<dbReference type="SUPFAM" id="SSF58069">
    <property type="entry name" value="Virus ectodomain"/>
    <property type="match status" value="1"/>
</dbReference>
<reference key="1">
    <citation type="journal article" date="1987" name="Nature">
        <title>Genome organization and transactivation of the human immunodeficiency virus type 2.</title>
        <authorList>
            <person name="Guyader M."/>
            <person name="Emerman M."/>
            <person name="Sonigo P."/>
            <person name="Clavel F."/>
            <person name="Montagnier L."/>
            <person name="Alizon M."/>
        </authorList>
    </citation>
    <scope>NUCLEOTIDE SEQUENCE [GENOMIC DNA]</scope>
</reference>
<reference key="2">
    <citation type="journal article" date="2001" name="J. Virol.">
        <title>DC-SIGN interactions with human immunodeficiency virus type 1 and 2 and simian immunodeficiency virus.</title>
        <authorList>
            <person name="Pohlmann S."/>
            <person name="Baribaud F."/>
            <person name="Lee B."/>
            <person name="Leslie G.J."/>
            <person name="Sanchez M.D."/>
            <person name="Hiebenthal-Millow K."/>
            <person name="Munch J."/>
            <person name="Kirchhoff F."/>
            <person name="Doms R.W."/>
        </authorList>
    </citation>
    <scope>INTERACTION OF SURFACE PROTEIN GP120 WITH HOST CD209/DC-SIGN</scope>
    <source>
        <strain>Isolate rod10</strain>
    </source>
</reference>
<reference key="3">
    <citation type="journal article" date="2002" name="J. Gen. Virol.">
        <title>Human immunodeficiency virus type 2.</title>
        <authorList>
            <person name="Reeves J.D."/>
            <person name="Doms R.W."/>
        </authorList>
    </citation>
    <scope>REVIEW</scope>
</reference>
<comment type="function">
    <text evidence="1">The surface protein gp120 (SU) attaches the virus to the host lymphoid cell by binding to the primary receptor CD4. This interaction induces a structural rearrangement creating a high affinity binding site for a chemokine coreceptor like CXCR4 and/or CCR5. This peculiar 2 stage receptor-interaction strategy allows gp120 to maintain the highly conserved coreceptor-binding site in a cryptic conformation, protected from neutralizing antibodies. Since CD4 also displays a binding site for the disulfide-isomerase P4HB/PDI, a P4HB/PDI-CD4-CXCR4-gp120 complex may form. In that complex, P4HB/PDI could reach and reduce gp120 disulfide bonds, causing major conformational changes in gp120. TXN, another PDI family member could also be involved in disulfide rearrangements in Env during fusion. These changes are transmitted to the transmembrane protein gp41 and are thought to activate its fusogenic potential by unmasking its fusion peptide (By similarity).</text>
</comment>
<comment type="function">
    <text evidence="1">The surface protein gp120 is a ligand for CD209/DC-SIGN and CLEC4M/DC-SIGNR, which are respectively found on dendritic cells (DCs), and on endothelial cells of liver sinusoids and lymph node sinuses. These interactions allow capture of viral particles at mucosal surfaces by these cells and subsequent transmission to permissive cells. DCs are professional antigen presenting cells, critical for host immunity by inducing specific immune responses against a broad variety of pathogens. They act as sentinels in various tissues where they take up antigen, process it, and present it to T-cells following migration to lymphoid organs. HIV subverts the migration properties of dendritic cells to gain access to CD4+ T-cells in lymph nodes. Virus transmission to permissive T-cells occurs either in trans (without DCs infection, through viral capture and transmission), or in cis (following DCs productive infection, through the usual CD4-gp120 interaction), thereby inducing a robust infection. In trans infection, bound virions remain infectious over days and it is proposed that they are not degraded, but protected in non-lysosomal acidic organelles within the DCs close to the cell membrane thus contributing to the viral infectious potential during DCs' migration from the periphery to the lymphoid tissues. On arrival at lymphoid tissues, intact virions recycle back to DCs' cell surface allowing virus transmission to CD4+ T-cells. Virion capture also seems to lead to MHC-II-restricted viral antigen presentation, and probably to the activation of HIV-specific CD4+ cells (By similarity).</text>
</comment>
<comment type="function">
    <text evidence="1">The transmembrane protein gp41 (TM) acts as a class I viral fusion protein. Under the current model, the protein has at least 3 conformational states: pre-fusion native state, pre-hairpin intermediate state, and post-fusion hairpin state. During fusion of viral and target intracellular membranes, the coiled coil regions (heptad repeats) assume a trimer-of-hairpins structure, positioning the fusion peptide in close proximity to the C-terminal region of the ectodomain. The formation of this structure appears to drive apposition and subsequent fusion of viral and target cell membranes. Complete fusion occurs in host cell endosomes and is dynamin-dependent, however some lipid transfer might occur at the plasma membrane. The virus undergoes clathrin-dependent internalization long before endosomal fusion, thus minimizing the surface exposure of conserved viral epitopes during fusion and reducing the efficacy of inhibitors targeting these epitopes. Membranes fusion leads to delivery of the nucleocapsid into the cytoplasm (By similarity).</text>
</comment>
<comment type="function">
    <text evidence="1">The envelope glycoprotein gp160 precursor down-modulates cell surface CD4 antigen by interacting with it in the endoplasmic reticulum and blocking its transport to the cell surface.</text>
</comment>
<comment type="function">
    <text evidence="1">The gp120-gp41 heterodimer seems to contribute to T-cell depletion during HIV-1 infection. The envelope glycoproteins expressed on the surface of infected cells induce apoptosis through an interaction with uninfected cells expressing the receptor (CD4) and the coreceptors CXCR4 or CCR5. This type of bystander killing may be obtained by at least three distinct mechanisms. First, the interaction between the 2 cells can induce cellular fusion followed by nuclear fusion within the syncytium. Syncytia are condemned to die from apoptosis. Second, the 2 interacting cells may not fuse entirely and simply exchange plasma membrane lipids, after a sort of hemifusion process, followed by rapid death. Third, it is possible that virus-infected cells, on the point of undergoing apoptosis, fuse with CD4-expressing cells, in which case apoptosis is rapidly transmitted from one cell to the other and thus occurs in a sort of contagious fashion (By similarity).</text>
</comment>
<comment type="function">
    <text evidence="1">The gp120-gp41 heterodimer allows rapid transcytosis of the virus through CD4 negative cells such as simple epithelial monolayers of the intestinal, rectal and endocervical epithelial barriers. Both gp120 and gp41 specifically recognize glycosphingolipids galactosyl-ceramide (GalCer) or 3' sulfo-galactosyl-ceramide (GalS) present in the lipid rafts structures of epithelial cells. Binding to these alternative receptors allows the rapid transcytosis of the virus through the epithelial cells. This transcytotic vesicle-mediated transport of virions from the apical side to the basolateral side of the epithelial cells does not involve infection of the cells themselves (By similarity).</text>
</comment>
<comment type="subunit">
    <molecule>Surface protein gp120</molecule>
    <text evidence="1">The mature envelope protein (Env) consists of a homotrimer of non-covalently associated gp120-gp41 heterodimers. The resulting complex protrudes from the virus surface as a spike. There seems to be as few as 10 spikes on the average virion. Interacts with human CD4, CCR5 and CXCR4, to form a P4HB/PDI-CD4-CXCR4-gp120 complex. Gp120 also interacts with the C-type lectins CD209/DC-SIGN and CLEC4M/DC-SIGNR (collectively referred to as DC-SIGN(R)). Gp120 and gp41 interact with GalCer (By similarity).</text>
</comment>
<comment type="subunit">
    <molecule>Transmembrane protein gp41</molecule>
    <text evidence="1">The mature envelope protein (Env) consists of a homotrimer of non-covalently associated gp120-gp41 heterodimers. The resulting complex protrudes from the virus surface as a spike. There seems to be as few as 10 spikes on the average virion.</text>
</comment>
<comment type="subcellular location">
    <molecule>Transmembrane protein gp41</molecule>
    <subcellularLocation>
        <location evidence="1">Virion membrane</location>
        <topology evidence="1">Single-pass type I membrane protein</topology>
    </subcellularLocation>
    <subcellularLocation>
        <location evidence="1">Host cell membrane</location>
        <topology evidence="1">Single-pass type I membrane protein</topology>
    </subcellularLocation>
    <subcellularLocation>
        <location evidence="4">Host endosome membrane</location>
        <topology evidence="4">Single-pass type I membrane protein</topology>
    </subcellularLocation>
    <text evidence="1">It is probably concentrated at the site of budding and incorporated into the virions possibly by contacts between the cytoplasmic tail of Env and the N-terminus of Gag.</text>
</comment>
<comment type="subcellular location">
    <molecule>Surface protein gp120</molecule>
    <subcellularLocation>
        <location evidence="1">Virion membrane</location>
        <topology evidence="1">Peripheral membrane protein</topology>
    </subcellularLocation>
    <subcellularLocation>
        <location evidence="1">Host cell membrane</location>
        <topology evidence="1">Peripheral membrane protein</topology>
    </subcellularLocation>
    <subcellularLocation>
        <location evidence="4">Host endosome membrane</location>
        <topology evidence="4">Peripheral membrane protein</topology>
    </subcellularLocation>
    <text evidence="1">The surface protein is not anchored to the viral envelope, but associates with the extravirion surface through its binding to TM. It is probably concentrated at the site of budding and incorporated into the virions possibly by contacts between the cytoplasmic tail of Env and the N-terminus of Gag (By similarity).</text>
</comment>
<comment type="domain">
    <text evidence="1">Some of the most genetically diverse regions of the viral genome are present in Env. They are called variable regions 1 through 5 (V1 through V5). Coreceptor usage of gp120 is determined mainly by the primary structure of the third variable region (V3) in the outer domain of gp120. Binding to CCR5 involves a region adjacent in addition to V3 (By similarity).</text>
</comment>
<comment type="domain">
    <text evidence="1">The 17 amino acids long immunosuppressive region is present in many retroviral envelope proteins. Synthetic peptides derived from this relatively conserved sequence inhibit immune function in vitro and in vivo (By similarity).</text>
</comment>
<comment type="PTM">
    <text evidence="1">Specific enzymatic cleavages in vivo yield mature proteins. Envelope glycoproteins are synthesized as an inactive precursor that is heavily N-glycosylated and processed likely by host cell furin in the Golgi to yield the mature SU and TM proteins. The cleavage site between SU and TM requires the minimal sequence [KR]-X-[KR]-R (By similarity).</text>
</comment>
<comment type="PTM">
    <text evidence="1">Palmitoylation of the transmembrane protein and of Env polyprotein (prior to its proteolytic cleavage) is essential for their association with host cell membrane lipid rafts. Palmitoylation is therefore required for envelope trafficking to classical lipid rafts, but not for viral replication (By similarity).</text>
</comment>
<comment type="miscellaneous">
    <text>Some HIV-2 isolates have been described that can infect cells independently of CD4, using CXCR4 as primary receptor. These isolates may have an exposed coreceptor binding site.</text>
</comment>
<sequence length="858" mass="98824">MMNQLLIAILLASACLVYCTQYVTVFYGVPTWKNATIPLFCATRNRDTWGTIQCLPDNDDYQEITLNVTEAFDAWNNTVTEQAIEDVWHLFETSIKPCVKLTPLCVAMKCSSTESSTGNNTTSKSTSTTTTTPTDQEQEISEDTPCARADNCSGLGEEETINCQFNMTGLERDKKKQYNETWYSKDVVCETNNSTNQTQCYMNHCNTSVITESCDKHYWDAIRFRYCAPPGYALLRCNDTNYSGFAPNCSKVVASTCTRMMETQTSTWFGFNGTRAENRTYIYWHGRDNRTIISLNKYYNLSLHCKRPGNKTVKQIMLMSGHVFHSHYQPINKRPRQAWCWFKGKWKDAMQEVKETLAKHPRYRGTNDTRNISFAAPGKGSDPEVAYMWTNCRGEFLYCNMTWFLNWIENKTHRNYAPCHIKQIINTWHKVGRNVYLPPREGELSCNSTVTSIIANIDWQNNNQTNITFSAEVAELYRLELGDYKLVEITPIGFAPTKEKRYSSAHGRHTRGVFVLGFLGFLATAGSAMGAASLTVSAQSRTLLAGIVQQQQQLLDVVKRQQELLRLTVWGTKNLQARVTAIEKYLQDQARLNSWGCAFRQVCHTTVPWVNDSLAPDWDNMTWQEWEKQVRYLEANISKSLEQAQIQQEKNMYELQKLNSWDIFGNWFDLTSWVKYIQYGVLIIVAVIALRIVIYVVQMLSRLRKGYRPVFSSPPGYIQQIHIHKDRGQPANEETEEDGGSNGGDRYWPWPIAYIHFLIRQLIRLLTRLYSICRDLLSRSFLTLQLIYQNLRDWLRLRTAFLQYGCEWIQEAFQAAARATRETLAGACRGLWRVLERIGRGILAVPRRIRQGAEIALL</sequence>
<proteinExistence type="evidence at protein level"/>
<feature type="signal peptide" evidence="2">
    <location>
        <begin position="1"/>
        <end position="19"/>
    </location>
</feature>
<feature type="chain" id="PRO_0000239503" description="Envelope glycoprotein gp160">
    <location>
        <begin position="20"/>
        <end position="858"/>
    </location>
</feature>
<feature type="chain" id="PRO_0000038449" description="Surface protein gp120" evidence="1">
    <location>
        <begin position="20"/>
        <end position="511"/>
    </location>
</feature>
<feature type="chain" id="PRO_0000038450" description="Transmembrane protein gp41" evidence="1">
    <location>
        <begin position="512"/>
        <end position="858"/>
    </location>
</feature>
<feature type="topological domain" description="Extracellular" evidence="2">
    <location>
        <begin position="20"/>
        <end position="679"/>
    </location>
</feature>
<feature type="transmembrane region" description="Helical" evidence="2">
    <location>
        <begin position="680"/>
        <end position="700"/>
    </location>
</feature>
<feature type="topological domain" description="Cytoplasmic" evidence="2">
    <location>
        <begin position="701"/>
        <end position="858"/>
    </location>
</feature>
<feature type="region of interest" description="V1">
    <location>
        <begin position="110"/>
        <end position="162"/>
    </location>
</feature>
<feature type="region of interest" description="Disordered" evidence="3">
    <location>
        <begin position="111"/>
        <end position="142"/>
    </location>
</feature>
<feature type="region of interest" description="V2">
    <location>
        <begin position="163"/>
        <end position="205"/>
    </location>
</feature>
<feature type="region of interest" description="V3">
    <location>
        <begin position="305"/>
        <end position="339"/>
    </location>
</feature>
<feature type="region of interest" description="V4">
    <location>
        <begin position="399"/>
        <end position="419"/>
    </location>
</feature>
<feature type="region of interest" description="V5">
    <location>
        <begin position="462"/>
        <end position="469"/>
    </location>
</feature>
<feature type="region of interest" description="Fusion peptide" evidence="2">
    <location>
        <begin position="512"/>
        <end position="532"/>
    </location>
</feature>
<feature type="region of interest" description="Immunosuppression" evidence="1">
    <location>
        <begin position="575"/>
        <end position="591"/>
    </location>
</feature>
<feature type="region of interest" description="MPER; binding to GalCer" evidence="1">
    <location>
        <begin position="657"/>
        <end position="678"/>
    </location>
</feature>
<feature type="coiled-coil region" evidence="2">
    <location>
        <begin position="624"/>
        <end position="645"/>
    </location>
</feature>
<feature type="short sequence motif" description="YXXV motif; contains endocytosis signal" evidence="1">
    <location>
        <begin position="707"/>
        <end position="710"/>
    </location>
</feature>
<feature type="short sequence motif" description="Di-leucine internalization motif" evidence="1">
    <location>
        <begin position="857"/>
        <end position="858"/>
    </location>
</feature>
<feature type="compositionally biased region" description="Low complexity" evidence="3">
    <location>
        <begin position="111"/>
        <end position="134"/>
    </location>
</feature>
<feature type="site" description="Cleavage; by host furin" evidence="2">
    <location>
        <begin position="511" status="uncertain"/>
        <end position="512" status="uncertain"/>
    </location>
</feature>
<feature type="lipid moiety-binding region" description="S-palmitoyl cysteine; by host" evidence="1">
    <location>
        <position position="773"/>
    </location>
</feature>
<feature type="glycosylation site" description="N-linked (GlcNAc...) asparagine; by host" evidence="2">
    <location>
        <position position="34"/>
    </location>
</feature>
<feature type="glycosylation site" description="N-linked (GlcNAc...) asparagine; by host" evidence="2">
    <location>
        <position position="67"/>
    </location>
</feature>
<feature type="glycosylation site" description="N-linked (GlcNAc...) asparagine; by host" evidence="2">
    <location>
        <position position="76"/>
    </location>
</feature>
<feature type="glycosylation site" description="N-linked (GlcNAc...) asparagine; by host" evidence="2">
    <location>
        <position position="119"/>
    </location>
</feature>
<feature type="glycosylation site" description="N-linked (GlcNAc...) asparagine; by host" evidence="2">
    <location>
        <position position="120"/>
    </location>
</feature>
<feature type="glycosylation site" description="N-linked (GlcNAc...) asparagine; by host" evidence="2">
    <location>
        <position position="151"/>
    </location>
</feature>
<feature type="glycosylation site" description="N-linked (GlcNAc...) asparagine; by host" evidence="2">
    <location>
        <position position="166"/>
    </location>
</feature>
<feature type="glycosylation site" description="N-linked (GlcNAc...) asparagine; by host" evidence="2">
    <location>
        <position position="179"/>
    </location>
</feature>
<feature type="glycosylation site" description="N-linked (GlcNAc...) asparagine; by host" evidence="2">
    <location>
        <position position="192"/>
    </location>
</feature>
<feature type="glycosylation site" description="N-linked (GlcNAc...) asparagine; by host" evidence="2">
    <location>
        <position position="193"/>
    </location>
</feature>
<feature type="glycosylation site" description="N-linked (GlcNAc...) asparagine; by host" evidence="2">
    <location>
        <position position="196"/>
    </location>
</feature>
<feature type="glycosylation site" description="N-linked (GlcNAc...) asparagine; by host" evidence="2">
    <location>
        <position position="206"/>
    </location>
</feature>
<feature type="glycosylation site" description="N-linked (GlcNAc...) asparagine; by host" evidence="2">
    <location>
        <position position="238"/>
    </location>
</feature>
<feature type="glycosylation site" description="N-linked (GlcNAc...) asparagine; by host" evidence="2">
    <location>
        <position position="241"/>
    </location>
</feature>
<feature type="glycosylation site" description="N-linked (GlcNAc...) asparagine; by host" evidence="2">
    <location>
        <position position="248"/>
    </location>
</feature>
<feature type="glycosylation site" description="N-linked (GlcNAc...) asparagine; by host" evidence="2">
    <location>
        <position position="272"/>
    </location>
</feature>
<feature type="glycosylation site" description="N-linked (GlcNAc...) asparagine; by host" evidence="2">
    <location>
        <position position="278"/>
    </location>
</feature>
<feature type="glycosylation site" description="N-linked (GlcNAc...) asparagine; by host" evidence="2">
    <location>
        <position position="289"/>
    </location>
</feature>
<feature type="glycosylation site" description="N-linked (GlcNAc...) asparagine; by host" evidence="2">
    <location>
        <position position="300"/>
    </location>
</feature>
<feature type="glycosylation site" description="N-linked (GlcNAc...) asparagine; by host" evidence="2">
    <location>
        <position position="310"/>
    </location>
</feature>
<feature type="glycosylation site" description="N-linked (GlcNAc...) asparagine; by host" evidence="2">
    <location>
        <position position="367"/>
    </location>
</feature>
<feature type="glycosylation site" description="N-linked (GlcNAc...) asparagine; by host" evidence="2">
    <location>
        <position position="371"/>
    </location>
</feature>
<feature type="glycosylation site" description="N-linked (GlcNAc...) asparagine; by host" evidence="2">
    <location>
        <position position="400"/>
    </location>
</feature>
<feature type="glycosylation site" description="N-linked (GlcNAc...) asparagine; by host" evidence="2">
    <location>
        <position position="410"/>
    </location>
</feature>
<feature type="glycosylation site" description="N-linked (GlcNAc...) asparagine; by host" evidence="2">
    <location>
        <position position="447"/>
    </location>
</feature>
<feature type="glycosylation site" description="N-linked (GlcNAc...) asparagine; by host" evidence="2">
    <location>
        <position position="463"/>
    </location>
</feature>
<feature type="glycosylation site" description="N-linked (GlcNAc...) asparagine; by host" evidence="2">
    <location>
        <position position="466"/>
    </location>
</feature>
<feature type="glycosylation site" description="N-linked (GlcNAc...) asparagine; by host" evidence="2">
    <location>
        <position position="611"/>
    </location>
</feature>
<feature type="glycosylation site" description="N-linked (GlcNAc...) asparagine; by host" evidence="2">
    <location>
        <position position="620"/>
    </location>
</feature>
<feature type="glycosylation site" description="N-linked (GlcNAc...) asparagine; by host" evidence="2">
    <location>
        <position position="636"/>
    </location>
</feature>
<feature type="disulfide bond" evidence="1">
    <location>
        <begin position="41"/>
        <end position="54"/>
    </location>
</feature>
<feature type="disulfide bond" evidence="1">
    <location>
        <begin position="98"/>
        <end position="214"/>
    </location>
</feature>
<feature type="disulfide bond" evidence="1">
    <location>
        <begin position="105"/>
        <end position="205"/>
    </location>
</feature>
<feature type="disulfide bond" evidence="1">
    <location>
        <begin position="110"/>
        <end position="163"/>
    </location>
</feature>
<feature type="disulfide bond" evidence="1">
    <location>
        <begin position="227"/>
        <end position="257"/>
    </location>
</feature>
<feature type="disulfide bond" evidence="1">
    <location>
        <begin position="237"/>
        <end position="249"/>
    </location>
</feature>
<feature type="disulfide bond" evidence="1">
    <location>
        <begin position="305"/>
        <end position="340"/>
    </location>
</feature>
<feature type="disulfide bond" evidence="1">
    <location>
        <begin position="392"/>
        <end position="446"/>
    </location>
</feature>
<feature type="disulfide bond" evidence="1">
    <location>
        <begin position="399"/>
        <end position="419"/>
    </location>
</feature>
<feature type="sequence conflict" description="In Ref. 1; AAB00770." evidence="4" ref="1">
    <original>T</original>
    <variation>I</variation>
    <location>
        <position position="312"/>
    </location>
</feature>
<protein>
    <recommendedName>
        <fullName>Envelope glycoprotein gp160</fullName>
    </recommendedName>
    <alternativeName>
        <fullName>Env polyprotein</fullName>
    </alternativeName>
    <component>
        <recommendedName>
            <fullName>Surface protein gp120</fullName>
            <shortName>SU</shortName>
        </recommendedName>
        <alternativeName>
            <fullName>Glycoprotein 120</fullName>
            <shortName>gp120</shortName>
        </alternativeName>
    </component>
    <component>
        <recommendedName>
            <fullName>Transmembrane protein gp41</fullName>
            <shortName>TM</shortName>
        </recommendedName>
        <alternativeName>
            <fullName>Glycoprotein 41</fullName>
            <shortName>gp41</shortName>
        </alternativeName>
    </component>
</protein>
<organismHost>
    <name type="scientific">Homo sapiens</name>
    <name type="common">Human</name>
    <dbReference type="NCBI Taxonomy" id="9606"/>
</organismHost>
<name>ENV_HV2RO</name>
<gene>
    <name type="primary">env</name>
</gene>
<keyword id="KW-0014">AIDS</keyword>
<keyword id="KW-0053">Apoptosis</keyword>
<keyword id="KW-1165">Clathrin-mediated endocytosis of virus by host</keyword>
<keyword id="KW-0165">Cleavage on pair of basic residues</keyword>
<keyword id="KW-0175">Coiled coil</keyword>
<keyword id="KW-1015">Disulfide bond</keyword>
<keyword id="KW-1170">Fusion of virus membrane with host endosomal membrane</keyword>
<keyword id="KW-1168">Fusion of virus membrane with host membrane</keyword>
<keyword id="KW-0325">Glycoprotein</keyword>
<keyword id="KW-1032">Host cell membrane</keyword>
<keyword id="KW-1039">Host endosome</keyword>
<keyword id="KW-1043">Host membrane</keyword>
<keyword id="KW-0945">Host-virus interaction</keyword>
<keyword id="KW-1090">Inhibition of host innate immune response by virus</keyword>
<keyword id="KW-1084">Inhibition of host tetherin by virus</keyword>
<keyword id="KW-0449">Lipoprotein</keyword>
<keyword id="KW-0472">Membrane</keyword>
<keyword id="KW-0564">Palmitate</keyword>
<keyword id="KW-0732">Signal</keyword>
<keyword id="KW-0812">Transmembrane</keyword>
<keyword id="KW-1133">Transmembrane helix</keyword>
<keyword id="KW-1161">Viral attachment to host cell</keyword>
<keyword id="KW-0261">Viral envelope protein</keyword>
<keyword id="KW-0899">Viral immunoevasion</keyword>
<keyword id="KW-1162">Viral penetration into host cytoplasm</keyword>
<keyword id="KW-0946">Virion</keyword>
<keyword id="KW-1164">Virus endocytosis by host</keyword>
<keyword id="KW-1160">Virus entry into host cell</keyword>
<accession>P04577</accession>
<organism>
    <name type="scientific">Human immunodeficiency virus type 2 subtype A (isolate ROD)</name>
    <name type="common">HIV-2</name>
    <dbReference type="NCBI Taxonomy" id="11720"/>
    <lineage>
        <taxon>Viruses</taxon>
        <taxon>Riboviria</taxon>
        <taxon>Pararnavirae</taxon>
        <taxon>Artverviricota</taxon>
        <taxon>Revtraviricetes</taxon>
        <taxon>Ortervirales</taxon>
        <taxon>Retroviridae</taxon>
        <taxon>Orthoretrovirinae</taxon>
        <taxon>Lentivirus</taxon>
        <taxon>Human immunodeficiency virus 2</taxon>
    </lineage>
</organism>